<feature type="chain" id="PRO_0000411439" description="ATP-dependent 6-phosphofructokinase">
    <location>
        <begin position="1"/>
        <end position="337"/>
    </location>
</feature>
<feature type="active site" description="Proton acceptor" evidence="1">
    <location>
        <position position="127"/>
    </location>
</feature>
<feature type="binding site" evidence="1">
    <location>
        <position position="11"/>
    </location>
    <ligand>
        <name>ATP</name>
        <dbReference type="ChEBI" id="CHEBI:30616"/>
    </ligand>
</feature>
<feature type="binding site" evidence="1">
    <location>
        <begin position="21"/>
        <end position="25"/>
    </location>
    <ligand>
        <name>ADP</name>
        <dbReference type="ChEBI" id="CHEBI:456216"/>
        <note>allosteric activator; ligand shared between dimeric partners</note>
    </ligand>
</feature>
<feature type="binding site" evidence="1">
    <location>
        <begin position="72"/>
        <end position="73"/>
    </location>
    <ligand>
        <name>ATP</name>
        <dbReference type="ChEBI" id="CHEBI:30616"/>
    </ligand>
</feature>
<feature type="binding site" evidence="1">
    <location>
        <begin position="102"/>
        <end position="105"/>
    </location>
    <ligand>
        <name>ATP</name>
        <dbReference type="ChEBI" id="CHEBI:30616"/>
    </ligand>
</feature>
<feature type="binding site" evidence="1">
    <location>
        <position position="103"/>
    </location>
    <ligand>
        <name>Mg(2+)</name>
        <dbReference type="ChEBI" id="CHEBI:18420"/>
        <note>catalytic</note>
    </ligand>
</feature>
<feature type="binding site" description="in other chain" evidence="1">
    <location>
        <begin position="125"/>
        <end position="127"/>
    </location>
    <ligand>
        <name>substrate</name>
        <note>ligand shared between dimeric partners</note>
    </ligand>
</feature>
<feature type="binding site" description="in other chain" evidence="1">
    <location>
        <position position="154"/>
    </location>
    <ligand>
        <name>ADP</name>
        <dbReference type="ChEBI" id="CHEBI:456216"/>
        <note>allosteric activator; ligand shared between dimeric partners</note>
    </ligand>
</feature>
<feature type="binding site" evidence="1">
    <location>
        <position position="162"/>
    </location>
    <ligand>
        <name>substrate</name>
        <note>ligand shared between dimeric partners</note>
    </ligand>
</feature>
<feature type="binding site" description="in other chain" evidence="1">
    <location>
        <begin position="169"/>
        <end position="171"/>
    </location>
    <ligand>
        <name>substrate</name>
        <note>ligand shared between dimeric partners</note>
    </ligand>
</feature>
<feature type="binding site" description="in other chain" evidence="1">
    <location>
        <begin position="185"/>
        <end position="187"/>
    </location>
    <ligand>
        <name>ADP</name>
        <dbReference type="ChEBI" id="CHEBI:456216"/>
        <note>allosteric activator; ligand shared between dimeric partners</note>
    </ligand>
</feature>
<feature type="binding site" description="in other chain" evidence="1">
    <location>
        <position position="212"/>
    </location>
    <ligand>
        <name>ADP</name>
        <dbReference type="ChEBI" id="CHEBI:456216"/>
        <note>allosteric activator; ligand shared between dimeric partners</note>
    </ligand>
</feature>
<feature type="binding site" description="in other chain" evidence="1">
    <location>
        <begin position="214"/>
        <end position="216"/>
    </location>
    <ligand>
        <name>ADP</name>
        <dbReference type="ChEBI" id="CHEBI:456216"/>
        <note>allosteric activator; ligand shared between dimeric partners</note>
    </ligand>
</feature>
<feature type="binding site" description="in other chain" evidence="1">
    <location>
        <position position="223"/>
    </location>
    <ligand>
        <name>substrate</name>
        <note>ligand shared between dimeric partners</note>
    </ligand>
</feature>
<feature type="binding site" evidence="1">
    <location>
        <position position="245"/>
    </location>
    <ligand>
        <name>substrate</name>
        <note>ligand shared between dimeric partners</note>
    </ligand>
</feature>
<feature type="binding site" description="in other chain" evidence="1">
    <location>
        <begin position="251"/>
        <end position="254"/>
    </location>
    <ligand>
        <name>substrate</name>
        <note>ligand shared between dimeric partners</note>
    </ligand>
</feature>
<protein>
    <recommendedName>
        <fullName evidence="1">ATP-dependent 6-phosphofructokinase</fullName>
        <shortName evidence="1">ATP-PFK</shortName>
        <shortName evidence="1">Phosphofructokinase</shortName>
        <ecNumber evidence="1">2.7.1.11</ecNumber>
    </recommendedName>
    <alternativeName>
        <fullName evidence="1">Phosphohexokinase</fullName>
    </alternativeName>
</protein>
<proteinExistence type="inferred from homology"/>
<accession>P0DD03</accession>
<accession>Q8K7A2</accession>
<sequence>MKRIAVLTSGGDAPGMNAAIRAVVRKAISEGMEVYGINRGYAGMVDGDIFPLGSKEVGDKISRGGTFLYSARYPEFAQLEGQLAGIEQLKKHGIEGVVVIGGDGSYHGAMRLTEHGFPAVGIPGTIDNDIAGTDYTIGFDTAVNTAVEAIDKLRDTSSSHGRTFVVEVMGRNAGDIALWAGIASGADQIIVPEEEFDIEKVASTIQYDFEHKGKNHHIIVLAEGVMSGEAFAQKLKEAGDKSDLRVTNLGHILRGGSPTARDRVIASWMGSHAVELLKEGKGGLAVGIHNEELVESPILGTAEEGALFSLTEEGQIIVNNPHKARLDFAALNRSLSQ</sequence>
<comment type="function">
    <text evidence="1">Catalyzes the phosphorylation of D-fructose 6-phosphate to fructose 1,6-bisphosphate by ATP, the first committing step of glycolysis.</text>
</comment>
<comment type="catalytic activity">
    <reaction evidence="1">
        <text>beta-D-fructose 6-phosphate + ATP = beta-D-fructose 1,6-bisphosphate + ADP + H(+)</text>
        <dbReference type="Rhea" id="RHEA:16109"/>
        <dbReference type="ChEBI" id="CHEBI:15378"/>
        <dbReference type="ChEBI" id="CHEBI:30616"/>
        <dbReference type="ChEBI" id="CHEBI:32966"/>
        <dbReference type="ChEBI" id="CHEBI:57634"/>
        <dbReference type="ChEBI" id="CHEBI:456216"/>
        <dbReference type="EC" id="2.7.1.11"/>
    </reaction>
</comment>
<comment type="cofactor">
    <cofactor evidence="1">
        <name>Mg(2+)</name>
        <dbReference type="ChEBI" id="CHEBI:18420"/>
    </cofactor>
</comment>
<comment type="activity regulation">
    <text evidence="1">Allosterically activated by ADP and other diphosphonucleosides, and allosterically inhibited by phosphoenolpyruvate.</text>
</comment>
<comment type="pathway">
    <text evidence="1">Carbohydrate degradation; glycolysis; D-glyceraldehyde 3-phosphate and glycerone phosphate from D-glucose: step 3/4.</text>
</comment>
<comment type="subunit">
    <text evidence="1">Homotetramer.</text>
</comment>
<comment type="subcellular location">
    <subcellularLocation>
        <location evidence="1">Cytoplasm</location>
    </subcellularLocation>
</comment>
<comment type="similarity">
    <text evidence="1">Belongs to the phosphofructokinase type A (PFKA) family. ATP-dependent PFK group I subfamily. Prokaryotic clade 'B1' sub-subfamily.</text>
</comment>
<evidence type="ECO:0000255" key="1">
    <source>
        <dbReference type="HAMAP-Rule" id="MF_00339"/>
    </source>
</evidence>
<reference key="1">
    <citation type="journal article" date="2003" name="Genome Res.">
        <title>Genome sequence of an M3 strain of Streptococcus pyogenes reveals a large-scale genomic rearrangement in invasive strains and new insights into phage evolution.</title>
        <authorList>
            <person name="Nakagawa I."/>
            <person name="Kurokawa K."/>
            <person name="Yamashita A."/>
            <person name="Nakata M."/>
            <person name="Tomiyasu Y."/>
            <person name="Okahashi N."/>
            <person name="Kawabata S."/>
            <person name="Yamazaki K."/>
            <person name="Shiba T."/>
            <person name="Yasunaga T."/>
            <person name="Hayashi H."/>
            <person name="Hattori M."/>
            <person name="Hamada S."/>
        </authorList>
    </citation>
    <scope>NUCLEOTIDE SEQUENCE [LARGE SCALE GENOMIC DNA]</scope>
    <source>
        <strain>SSI-1</strain>
    </source>
</reference>
<keyword id="KW-0021">Allosteric enzyme</keyword>
<keyword id="KW-0067">ATP-binding</keyword>
<keyword id="KW-0963">Cytoplasm</keyword>
<keyword id="KW-0324">Glycolysis</keyword>
<keyword id="KW-0418">Kinase</keyword>
<keyword id="KW-0460">Magnesium</keyword>
<keyword id="KW-0479">Metal-binding</keyword>
<keyword id="KW-0547">Nucleotide-binding</keyword>
<keyword id="KW-0808">Transferase</keyword>
<dbReference type="EC" id="2.7.1.11" evidence="1"/>
<dbReference type="EMBL" id="BA000034">
    <property type="protein sequence ID" value="BAC64207.1"/>
    <property type="molecule type" value="Genomic_DNA"/>
</dbReference>
<dbReference type="RefSeq" id="WP_011054544.1">
    <property type="nucleotide sequence ID" value="NC_004606.1"/>
</dbReference>
<dbReference type="SMR" id="P0DD03"/>
<dbReference type="KEGG" id="sps:SPs1112"/>
<dbReference type="HOGENOM" id="CLU_020655_0_1_9"/>
<dbReference type="UniPathway" id="UPA00109">
    <property type="reaction ID" value="UER00182"/>
</dbReference>
<dbReference type="GO" id="GO:0005945">
    <property type="term" value="C:6-phosphofructokinase complex"/>
    <property type="evidence" value="ECO:0007669"/>
    <property type="project" value="TreeGrafter"/>
</dbReference>
<dbReference type="GO" id="GO:0003872">
    <property type="term" value="F:6-phosphofructokinase activity"/>
    <property type="evidence" value="ECO:0007669"/>
    <property type="project" value="UniProtKB-UniRule"/>
</dbReference>
<dbReference type="GO" id="GO:0016208">
    <property type="term" value="F:AMP binding"/>
    <property type="evidence" value="ECO:0007669"/>
    <property type="project" value="TreeGrafter"/>
</dbReference>
<dbReference type="GO" id="GO:0005524">
    <property type="term" value="F:ATP binding"/>
    <property type="evidence" value="ECO:0007669"/>
    <property type="project" value="UniProtKB-KW"/>
</dbReference>
<dbReference type="GO" id="GO:0070095">
    <property type="term" value="F:fructose-6-phosphate binding"/>
    <property type="evidence" value="ECO:0007669"/>
    <property type="project" value="TreeGrafter"/>
</dbReference>
<dbReference type="GO" id="GO:0042802">
    <property type="term" value="F:identical protein binding"/>
    <property type="evidence" value="ECO:0007669"/>
    <property type="project" value="TreeGrafter"/>
</dbReference>
<dbReference type="GO" id="GO:0046872">
    <property type="term" value="F:metal ion binding"/>
    <property type="evidence" value="ECO:0007669"/>
    <property type="project" value="UniProtKB-KW"/>
</dbReference>
<dbReference type="GO" id="GO:0048029">
    <property type="term" value="F:monosaccharide binding"/>
    <property type="evidence" value="ECO:0007669"/>
    <property type="project" value="TreeGrafter"/>
</dbReference>
<dbReference type="GO" id="GO:0061621">
    <property type="term" value="P:canonical glycolysis"/>
    <property type="evidence" value="ECO:0007669"/>
    <property type="project" value="TreeGrafter"/>
</dbReference>
<dbReference type="GO" id="GO:0030388">
    <property type="term" value="P:fructose 1,6-bisphosphate metabolic process"/>
    <property type="evidence" value="ECO:0007669"/>
    <property type="project" value="TreeGrafter"/>
</dbReference>
<dbReference type="GO" id="GO:0006002">
    <property type="term" value="P:fructose 6-phosphate metabolic process"/>
    <property type="evidence" value="ECO:0007669"/>
    <property type="project" value="InterPro"/>
</dbReference>
<dbReference type="FunFam" id="3.40.50.450:FF:000001">
    <property type="entry name" value="ATP-dependent 6-phosphofructokinase"/>
    <property type="match status" value="1"/>
</dbReference>
<dbReference type="FunFam" id="3.40.50.460:FF:000002">
    <property type="entry name" value="ATP-dependent 6-phosphofructokinase"/>
    <property type="match status" value="1"/>
</dbReference>
<dbReference type="Gene3D" id="3.40.50.450">
    <property type="match status" value="1"/>
</dbReference>
<dbReference type="Gene3D" id="3.40.50.460">
    <property type="entry name" value="Phosphofructokinase domain"/>
    <property type="match status" value="1"/>
</dbReference>
<dbReference type="HAMAP" id="MF_00339">
    <property type="entry name" value="Phosphofructokinase_I_B1"/>
    <property type="match status" value="1"/>
</dbReference>
<dbReference type="InterPro" id="IPR022953">
    <property type="entry name" value="ATP_PFK"/>
</dbReference>
<dbReference type="InterPro" id="IPR012003">
    <property type="entry name" value="ATP_PFK_prok-type"/>
</dbReference>
<dbReference type="InterPro" id="IPR012828">
    <property type="entry name" value="PFKA_ATP_prok"/>
</dbReference>
<dbReference type="InterPro" id="IPR015912">
    <property type="entry name" value="Phosphofructokinase_CS"/>
</dbReference>
<dbReference type="InterPro" id="IPR000023">
    <property type="entry name" value="Phosphofructokinase_dom"/>
</dbReference>
<dbReference type="InterPro" id="IPR035966">
    <property type="entry name" value="PKF_sf"/>
</dbReference>
<dbReference type="NCBIfam" id="TIGR02482">
    <property type="entry name" value="PFKA_ATP"/>
    <property type="match status" value="1"/>
</dbReference>
<dbReference type="NCBIfam" id="NF002872">
    <property type="entry name" value="PRK03202.1"/>
    <property type="match status" value="1"/>
</dbReference>
<dbReference type="PANTHER" id="PTHR13697:SF4">
    <property type="entry name" value="ATP-DEPENDENT 6-PHOSPHOFRUCTOKINASE"/>
    <property type="match status" value="1"/>
</dbReference>
<dbReference type="PANTHER" id="PTHR13697">
    <property type="entry name" value="PHOSPHOFRUCTOKINASE"/>
    <property type="match status" value="1"/>
</dbReference>
<dbReference type="Pfam" id="PF00365">
    <property type="entry name" value="PFK"/>
    <property type="match status" value="1"/>
</dbReference>
<dbReference type="PIRSF" id="PIRSF000532">
    <property type="entry name" value="ATP_PFK_prok"/>
    <property type="match status" value="1"/>
</dbReference>
<dbReference type="PRINTS" id="PR00476">
    <property type="entry name" value="PHFRCTKINASE"/>
</dbReference>
<dbReference type="SUPFAM" id="SSF53784">
    <property type="entry name" value="Phosphofructokinase"/>
    <property type="match status" value="1"/>
</dbReference>
<dbReference type="PROSITE" id="PS00433">
    <property type="entry name" value="PHOSPHOFRUCTOKINASE"/>
    <property type="match status" value="1"/>
</dbReference>
<organism>
    <name type="scientific">Streptococcus pyogenes serotype M3 (strain SSI-1)</name>
    <dbReference type="NCBI Taxonomy" id="193567"/>
    <lineage>
        <taxon>Bacteria</taxon>
        <taxon>Bacillati</taxon>
        <taxon>Bacillota</taxon>
        <taxon>Bacilli</taxon>
        <taxon>Lactobacillales</taxon>
        <taxon>Streptococcaceae</taxon>
        <taxon>Streptococcus</taxon>
    </lineage>
</organism>
<gene>
    <name evidence="1" type="primary">pfkA</name>
    <name type="synonym">pfk</name>
    <name type="ordered locus">SPs1112</name>
</gene>
<name>PFKA_STRPQ</name>